<feature type="chain" id="PRO_1000002845" description="Crossover junction endodeoxyribonuclease RuvC">
    <location>
        <begin position="1"/>
        <end position="154"/>
    </location>
</feature>
<feature type="active site" evidence="1">
    <location>
        <position position="7"/>
    </location>
</feature>
<feature type="active site" evidence="1">
    <location>
        <position position="67"/>
    </location>
</feature>
<feature type="active site" evidence="1">
    <location>
        <position position="139"/>
    </location>
</feature>
<feature type="binding site" evidence="1">
    <location>
        <position position="7"/>
    </location>
    <ligand>
        <name>Mg(2+)</name>
        <dbReference type="ChEBI" id="CHEBI:18420"/>
        <label>1</label>
    </ligand>
</feature>
<feature type="binding site" evidence="1">
    <location>
        <position position="67"/>
    </location>
    <ligand>
        <name>Mg(2+)</name>
        <dbReference type="ChEBI" id="CHEBI:18420"/>
        <label>2</label>
    </ligand>
</feature>
<feature type="binding site" evidence="1">
    <location>
        <position position="139"/>
    </location>
    <ligand>
        <name>Mg(2+)</name>
        <dbReference type="ChEBI" id="CHEBI:18420"/>
        <label>1</label>
    </ligand>
</feature>
<protein>
    <recommendedName>
        <fullName evidence="1">Crossover junction endodeoxyribonuclease RuvC</fullName>
        <ecNumber evidence="1">3.1.21.10</ecNumber>
    </recommendedName>
    <alternativeName>
        <fullName evidence="1">Holliday junction nuclease RuvC</fullName>
    </alternativeName>
    <alternativeName>
        <fullName evidence="1">Holliday junction resolvase RuvC</fullName>
    </alternativeName>
</protein>
<evidence type="ECO:0000255" key="1">
    <source>
        <dbReference type="HAMAP-Rule" id="MF_00034"/>
    </source>
</evidence>
<reference key="1">
    <citation type="submission" date="2005-08" db="EMBL/GenBank/DDBJ databases">
        <title>Complete sequence of Synechococcus sp. CC9902.</title>
        <authorList>
            <person name="Copeland A."/>
            <person name="Lucas S."/>
            <person name="Lapidus A."/>
            <person name="Barry K."/>
            <person name="Detter J.C."/>
            <person name="Glavina T."/>
            <person name="Hammon N."/>
            <person name="Israni S."/>
            <person name="Pitluck S."/>
            <person name="Martinez M."/>
            <person name="Schmutz J."/>
            <person name="Larimer F."/>
            <person name="Land M."/>
            <person name="Kyrpides N."/>
            <person name="Ivanova N."/>
            <person name="Richardson P."/>
        </authorList>
    </citation>
    <scope>NUCLEOTIDE SEQUENCE [LARGE SCALE GENOMIC DNA]</scope>
    <source>
        <strain>CC9902</strain>
    </source>
</reference>
<dbReference type="EC" id="3.1.21.10" evidence="1"/>
<dbReference type="EMBL" id="CP000097">
    <property type="protein sequence ID" value="ABB25680.1"/>
    <property type="molecule type" value="Genomic_DNA"/>
</dbReference>
<dbReference type="RefSeq" id="WP_009790266.1">
    <property type="nucleotide sequence ID" value="NC_007513.1"/>
</dbReference>
<dbReference type="SMR" id="Q3AYZ7"/>
<dbReference type="STRING" id="316279.Syncc9902_0712"/>
<dbReference type="KEGG" id="sye:Syncc9902_0712"/>
<dbReference type="eggNOG" id="COG0817">
    <property type="taxonomic scope" value="Bacteria"/>
</dbReference>
<dbReference type="HOGENOM" id="CLU_091257_3_1_3"/>
<dbReference type="OrthoDB" id="9805499at2"/>
<dbReference type="Proteomes" id="UP000002712">
    <property type="component" value="Chromosome"/>
</dbReference>
<dbReference type="GO" id="GO:0005737">
    <property type="term" value="C:cytoplasm"/>
    <property type="evidence" value="ECO:0007669"/>
    <property type="project" value="UniProtKB-SubCell"/>
</dbReference>
<dbReference type="GO" id="GO:0048476">
    <property type="term" value="C:Holliday junction resolvase complex"/>
    <property type="evidence" value="ECO:0007669"/>
    <property type="project" value="UniProtKB-UniRule"/>
</dbReference>
<dbReference type="GO" id="GO:0008821">
    <property type="term" value="F:crossover junction DNA endonuclease activity"/>
    <property type="evidence" value="ECO:0007669"/>
    <property type="project" value="UniProtKB-UniRule"/>
</dbReference>
<dbReference type="GO" id="GO:0003677">
    <property type="term" value="F:DNA binding"/>
    <property type="evidence" value="ECO:0007669"/>
    <property type="project" value="UniProtKB-KW"/>
</dbReference>
<dbReference type="GO" id="GO:0000287">
    <property type="term" value="F:magnesium ion binding"/>
    <property type="evidence" value="ECO:0007669"/>
    <property type="project" value="UniProtKB-UniRule"/>
</dbReference>
<dbReference type="GO" id="GO:0006310">
    <property type="term" value="P:DNA recombination"/>
    <property type="evidence" value="ECO:0007669"/>
    <property type="project" value="UniProtKB-UniRule"/>
</dbReference>
<dbReference type="GO" id="GO:0006281">
    <property type="term" value="P:DNA repair"/>
    <property type="evidence" value="ECO:0007669"/>
    <property type="project" value="UniProtKB-UniRule"/>
</dbReference>
<dbReference type="CDD" id="cd16962">
    <property type="entry name" value="RuvC"/>
    <property type="match status" value="1"/>
</dbReference>
<dbReference type="FunFam" id="3.30.420.10:FF:000002">
    <property type="entry name" value="Crossover junction endodeoxyribonuclease RuvC"/>
    <property type="match status" value="1"/>
</dbReference>
<dbReference type="Gene3D" id="3.30.420.10">
    <property type="entry name" value="Ribonuclease H-like superfamily/Ribonuclease H"/>
    <property type="match status" value="1"/>
</dbReference>
<dbReference type="HAMAP" id="MF_00034">
    <property type="entry name" value="RuvC"/>
    <property type="match status" value="1"/>
</dbReference>
<dbReference type="InterPro" id="IPR012337">
    <property type="entry name" value="RNaseH-like_sf"/>
</dbReference>
<dbReference type="InterPro" id="IPR036397">
    <property type="entry name" value="RNaseH_sf"/>
</dbReference>
<dbReference type="InterPro" id="IPR020563">
    <property type="entry name" value="X-over_junc_endoDNase_Mg_BS"/>
</dbReference>
<dbReference type="InterPro" id="IPR002176">
    <property type="entry name" value="X-over_junc_endoDNase_RuvC"/>
</dbReference>
<dbReference type="NCBIfam" id="NF000711">
    <property type="entry name" value="PRK00039.2-1"/>
    <property type="match status" value="1"/>
</dbReference>
<dbReference type="PANTHER" id="PTHR30194">
    <property type="entry name" value="CROSSOVER JUNCTION ENDODEOXYRIBONUCLEASE RUVC"/>
    <property type="match status" value="1"/>
</dbReference>
<dbReference type="PANTHER" id="PTHR30194:SF3">
    <property type="entry name" value="CROSSOVER JUNCTION ENDODEOXYRIBONUCLEASE RUVC"/>
    <property type="match status" value="1"/>
</dbReference>
<dbReference type="Pfam" id="PF02075">
    <property type="entry name" value="RuvC"/>
    <property type="match status" value="1"/>
</dbReference>
<dbReference type="PRINTS" id="PR00696">
    <property type="entry name" value="RSOLVASERUVC"/>
</dbReference>
<dbReference type="SUPFAM" id="SSF53098">
    <property type="entry name" value="Ribonuclease H-like"/>
    <property type="match status" value="1"/>
</dbReference>
<dbReference type="PROSITE" id="PS01321">
    <property type="entry name" value="RUVC"/>
    <property type="match status" value="1"/>
</dbReference>
<name>RUVC_SYNS9</name>
<organism>
    <name type="scientific">Synechococcus sp. (strain CC9902)</name>
    <dbReference type="NCBI Taxonomy" id="316279"/>
    <lineage>
        <taxon>Bacteria</taxon>
        <taxon>Bacillati</taxon>
        <taxon>Cyanobacteriota</taxon>
        <taxon>Cyanophyceae</taxon>
        <taxon>Synechococcales</taxon>
        <taxon>Synechococcaceae</taxon>
        <taxon>Synechococcus</taxon>
    </lineage>
</organism>
<gene>
    <name evidence="1" type="primary">ruvC</name>
    <name type="ordered locus">Syncc9902_0712</name>
</gene>
<comment type="function">
    <text evidence="1">The RuvA-RuvB-RuvC complex processes Holliday junction (HJ) DNA during genetic recombination and DNA repair. Endonuclease that resolves HJ intermediates. Cleaves cruciform DNA by making single-stranded nicks across the HJ at symmetrical positions within the homologous arms, yielding a 5'-phosphate and a 3'-hydroxyl group; requires a central core of homology in the junction. The consensus cleavage sequence is 5'-(A/T)TT(C/G)-3'. Cleavage occurs on the 3'-side of the TT dinucleotide at the point of strand exchange. HJ branch migration catalyzed by RuvA-RuvB allows RuvC to scan DNA until it finds its consensus sequence, where it cleaves and resolves the cruciform DNA.</text>
</comment>
<comment type="catalytic activity">
    <reaction evidence="1">
        <text>Endonucleolytic cleavage at a junction such as a reciprocal single-stranded crossover between two homologous DNA duplexes (Holliday junction).</text>
        <dbReference type="EC" id="3.1.21.10"/>
    </reaction>
</comment>
<comment type="cofactor">
    <cofactor evidence="1">
        <name>Mg(2+)</name>
        <dbReference type="ChEBI" id="CHEBI:18420"/>
    </cofactor>
    <text evidence="1">Binds 2 Mg(2+) ion per subunit.</text>
</comment>
<comment type="subunit">
    <text evidence="1">Homodimer which binds Holliday junction (HJ) DNA. The HJ becomes 2-fold symmetrical on binding to RuvC with unstacked arms; it has a different conformation from HJ DNA in complex with RuvA. In the full resolvosome a probable DNA-RuvA(4)-RuvB(12)-RuvC(2) complex forms which resolves the HJ.</text>
</comment>
<comment type="subcellular location">
    <subcellularLocation>
        <location evidence="1">Cytoplasm</location>
    </subcellularLocation>
</comment>
<comment type="similarity">
    <text evidence="1">Belongs to the RuvC family.</text>
</comment>
<accession>Q3AYZ7</accession>
<sequence length="154" mass="17037">MRILGIDPGLARVGYGVIDTSGGQQRMLDCGIIRTEPGYSEGDRMVVIASDLRQLIRAWRPELAAVEKFFFYRSSTTISVVQARGVVMMTLARFKVPVVEFPPMQIKLALAGFGHAEKDEVLEAVMRELNLTDPPRPDDAADALAVALTGWFQR</sequence>
<proteinExistence type="inferred from homology"/>
<keyword id="KW-0963">Cytoplasm</keyword>
<keyword id="KW-0227">DNA damage</keyword>
<keyword id="KW-0233">DNA recombination</keyword>
<keyword id="KW-0234">DNA repair</keyword>
<keyword id="KW-0238">DNA-binding</keyword>
<keyword id="KW-0255">Endonuclease</keyword>
<keyword id="KW-0378">Hydrolase</keyword>
<keyword id="KW-0460">Magnesium</keyword>
<keyword id="KW-0479">Metal-binding</keyword>
<keyword id="KW-0540">Nuclease</keyword>
<keyword id="KW-1185">Reference proteome</keyword>